<feature type="chain" id="PRO_0000065434" description="Mediator of RNA polymerase II transcription subunit 15">
    <location>
        <begin position="1"/>
        <end position="780"/>
    </location>
</feature>
<feature type="region of interest" description="Interaction with nhr-49">
    <location>
        <begin position="1"/>
        <end position="124"/>
    </location>
</feature>
<feature type="region of interest" description="Interaction with sbp-1">
    <location>
        <begin position="2"/>
        <end position="96"/>
    </location>
</feature>
<feature type="region of interest" description="Disordered" evidence="2">
    <location>
        <begin position="91"/>
        <end position="152"/>
    </location>
</feature>
<feature type="region of interest" description="Disordered" evidence="2">
    <location>
        <begin position="166"/>
        <end position="363"/>
    </location>
</feature>
<feature type="region of interest" description="Disordered" evidence="2">
    <location>
        <begin position="564"/>
        <end position="597"/>
    </location>
</feature>
<feature type="compositionally biased region" description="Low complexity" evidence="2">
    <location>
        <begin position="125"/>
        <end position="139"/>
    </location>
</feature>
<feature type="compositionally biased region" description="Gly residues" evidence="2">
    <location>
        <begin position="225"/>
        <end position="245"/>
    </location>
</feature>
<feature type="compositionally biased region" description="Polar residues" evidence="2">
    <location>
        <begin position="296"/>
        <end position="316"/>
    </location>
</feature>
<feature type="compositionally biased region" description="Low complexity" evidence="2">
    <location>
        <begin position="333"/>
        <end position="353"/>
    </location>
</feature>
<feature type="compositionally biased region" description="Low complexity" evidence="2">
    <location>
        <begin position="574"/>
        <end position="594"/>
    </location>
</feature>
<feature type="splice variant" id="VSP_020624" description="In isoform b." evidence="6">
    <location>
        <begin position="94"/>
        <end position="96"/>
    </location>
</feature>
<dbReference type="EMBL" id="FO081686">
    <property type="protein sequence ID" value="CCD73316.1"/>
    <property type="molecule type" value="Genomic_DNA"/>
</dbReference>
<dbReference type="EMBL" id="FO081686">
    <property type="protein sequence ID" value="CCD73317.1"/>
    <property type="molecule type" value="Genomic_DNA"/>
</dbReference>
<dbReference type="PIR" id="T16726">
    <property type="entry name" value="T16726"/>
</dbReference>
<dbReference type="RefSeq" id="NP_001380037.1">
    <molecule id="Q21955-1"/>
    <property type="nucleotide sequence ID" value="NM_001392110.1"/>
</dbReference>
<dbReference type="RefSeq" id="NP_741151.1">
    <molecule id="Q21955-2"/>
    <property type="nucleotide sequence ID" value="NM_171134.9"/>
</dbReference>
<dbReference type="RefSeq" id="NP_741152.1">
    <property type="nucleotide sequence ID" value="NM_171867.4"/>
</dbReference>
<dbReference type="SMR" id="Q21955"/>
<dbReference type="BioGRID" id="41039">
    <property type="interactions" value="24"/>
</dbReference>
<dbReference type="DIP" id="DIP-38923N"/>
<dbReference type="FunCoup" id="Q21955">
    <property type="interactions" value="20"/>
</dbReference>
<dbReference type="IntAct" id="Q21955">
    <property type="interactions" value="14"/>
</dbReference>
<dbReference type="STRING" id="6239.R12B2.5a.1"/>
<dbReference type="PaxDb" id="6239-R12B2.5a.1"/>
<dbReference type="PeptideAtlas" id="Q21955"/>
<dbReference type="EnsemblMetazoa" id="R12B2.5a.1">
    <molecule id="Q21955-1"/>
    <property type="protein sequence ID" value="R12B2.5a.1"/>
    <property type="gene ID" value="WBGene00007016"/>
</dbReference>
<dbReference type="EnsemblMetazoa" id="R12B2.5a.2">
    <molecule id="Q21955-1"/>
    <property type="protein sequence ID" value="R12B2.5a.2"/>
    <property type="gene ID" value="WBGene00007016"/>
</dbReference>
<dbReference type="EnsemblMetazoa" id="R12B2.5a.3">
    <molecule id="Q21955-1"/>
    <property type="protein sequence ID" value="R12B2.5a.3"/>
    <property type="gene ID" value="WBGene00007016"/>
</dbReference>
<dbReference type="EnsemblMetazoa" id="R12B2.5b.1">
    <molecule id="Q21955-2"/>
    <property type="protein sequence ID" value="R12B2.5b.1"/>
    <property type="gene ID" value="WBGene00007016"/>
</dbReference>
<dbReference type="EnsemblMetazoa" id="R12B2.5b.2">
    <molecule id="Q21955-2"/>
    <property type="protein sequence ID" value="R12B2.5b.2"/>
    <property type="gene ID" value="WBGene00007016"/>
</dbReference>
<dbReference type="GeneID" id="175817"/>
<dbReference type="KEGG" id="cel:CELE_R12B2.5"/>
<dbReference type="UCSC" id="R12B2.5b.2">
    <molecule id="Q21955-1"/>
    <property type="organism name" value="c. elegans"/>
</dbReference>
<dbReference type="AGR" id="WB:WBGene00007016"/>
<dbReference type="CTD" id="175817"/>
<dbReference type="WormBase" id="R12B2.5a">
    <molecule id="Q21955-1"/>
    <property type="protein sequence ID" value="CE30108"/>
    <property type="gene ID" value="WBGene00007016"/>
    <property type="gene designation" value="mdt-15"/>
</dbReference>
<dbReference type="WormBase" id="R12B2.5b">
    <molecule id="Q21955-2"/>
    <property type="protein sequence ID" value="CE25078"/>
    <property type="gene ID" value="WBGene00007016"/>
    <property type="gene designation" value="mdt-15"/>
</dbReference>
<dbReference type="eggNOG" id="KOG4274">
    <property type="taxonomic scope" value="Eukaryota"/>
</dbReference>
<dbReference type="InParanoid" id="Q21955"/>
<dbReference type="OMA" id="CVSKDEY"/>
<dbReference type="OrthoDB" id="10055322at2759"/>
<dbReference type="PRO" id="PR:Q21955"/>
<dbReference type="Proteomes" id="UP000001940">
    <property type="component" value="Chromosome III"/>
</dbReference>
<dbReference type="Bgee" id="WBGene00007016">
    <property type="expression patterns" value="Expressed in pharyngeal muscle cell (C elegans) and 4 other cell types or tissues"/>
</dbReference>
<dbReference type="GO" id="GO:0005634">
    <property type="term" value="C:nucleus"/>
    <property type="evidence" value="ECO:0007669"/>
    <property type="project" value="UniProtKB-SubCell"/>
</dbReference>
<dbReference type="GO" id="GO:0016922">
    <property type="term" value="F:nuclear receptor binding"/>
    <property type="evidence" value="ECO:0000353"/>
    <property type="project" value="WormBase"/>
</dbReference>
<dbReference type="GO" id="GO:0003713">
    <property type="term" value="F:transcription coactivator activity"/>
    <property type="evidence" value="ECO:0000314"/>
    <property type="project" value="WormBase"/>
</dbReference>
<dbReference type="GO" id="GO:0008340">
    <property type="term" value="P:determination of adult lifespan"/>
    <property type="evidence" value="ECO:0000315"/>
    <property type="project" value="WormBase"/>
</dbReference>
<dbReference type="GO" id="GO:0009792">
    <property type="term" value="P:embryo development ending in birth or egg hatching"/>
    <property type="evidence" value="ECO:0000315"/>
    <property type="project" value="WormBase"/>
</dbReference>
<dbReference type="GO" id="GO:0040011">
    <property type="term" value="P:locomotion"/>
    <property type="evidence" value="ECO:0000315"/>
    <property type="project" value="WormBase"/>
</dbReference>
<dbReference type="GO" id="GO:0002119">
    <property type="term" value="P:nematode larval development"/>
    <property type="evidence" value="ECO:0000315"/>
    <property type="project" value="WormBase"/>
</dbReference>
<dbReference type="GO" id="GO:0045893">
    <property type="term" value="P:positive regulation of DNA-templated transcription"/>
    <property type="evidence" value="ECO:0000314"/>
    <property type="project" value="WormBase"/>
</dbReference>
<dbReference type="GO" id="GO:0019217">
    <property type="term" value="P:regulation of fatty acid metabolic process"/>
    <property type="evidence" value="ECO:0000315"/>
    <property type="project" value="WormBase"/>
</dbReference>
<dbReference type="GO" id="GO:0010468">
    <property type="term" value="P:regulation of gene expression"/>
    <property type="evidence" value="ECO:0000315"/>
    <property type="project" value="WormBase"/>
</dbReference>
<dbReference type="GO" id="GO:0040014">
    <property type="term" value="P:regulation of multicellular organism growth"/>
    <property type="evidence" value="ECO:0000315"/>
    <property type="project" value="WormBase"/>
</dbReference>
<dbReference type="GO" id="GO:0030730">
    <property type="term" value="P:triglyceride storage"/>
    <property type="evidence" value="ECO:0000315"/>
    <property type="project" value="WormBase"/>
</dbReference>
<dbReference type="FunFam" id="1.10.246.20:FF:000006">
    <property type="entry name" value="Mediator of RNA polymerase II transcription subunit 15"/>
    <property type="match status" value="1"/>
</dbReference>
<dbReference type="Gene3D" id="1.10.246.20">
    <property type="entry name" value="Coactivator CBP, KIX domain"/>
    <property type="match status" value="1"/>
</dbReference>
<dbReference type="InterPro" id="IPR036529">
    <property type="entry name" value="KIX_dom_sf"/>
</dbReference>
<dbReference type="InterPro" id="IPR048386">
    <property type="entry name" value="Med15_C"/>
</dbReference>
<dbReference type="InterPro" id="IPR019087">
    <property type="entry name" value="Med15_N"/>
</dbReference>
<dbReference type="Pfam" id="PF21539">
    <property type="entry name" value="Med15_C"/>
    <property type="match status" value="1"/>
</dbReference>
<dbReference type="Pfam" id="PF09606">
    <property type="entry name" value="Med15_N"/>
    <property type="match status" value="1"/>
</dbReference>
<evidence type="ECO:0000250" key="1"/>
<evidence type="ECO:0000256" key="2">
    <source>
        <dbReference type="SAM" id="MobiDB-lite"/>
    </source>
</evidence>
<evidence type="ECO:0000269" key="3">
    <source>
    </source>
</evidence>
<evidence type="ECO:0000269" key="4">
    <source>
    </source>
</evidence>
<evidence type="ECO:0000269" key="5">
    <source>
    </source>
</evidence>
<evidence type="ECO:0000305" key="6"/>
<name>MED15_CAEEL</name>
<organism>
    <name type="scientific">Caenorhabditis elegans</name>
    <dbReference type="NCBI Taxonomy" id="6239"/>
    <lineage>
        <taxon>Eukaryota</taxon>
        <taxon>Metazoa</taxon>
        <taxon>Ecdysozoa</taxon>
        <taxon>Nematoda</taxon>
        <taxon>Chromadorea</taxon>
        <taxon>Rhabditida</taxon>
        <taxon>Rhabditina</taxon>
        <taxon>Rhabditomorpha</taxon>
        <taxon>Rhabditoidea</taxon>
        <taxon>Rhabditidae</taxon>
        <taxon>Peloderinae</taxon>
        <taxon>Caenorhabditis</taxon>
    </lineage>
</organism>
<comment type="function">
    <text evidence="1 3 4">Component of the Mediator complex, a coactivator involved in regulated gene transcription of nearly all RNA polymerase II-dependent genes. Mediator functions as a bridge to convey information from gene-specific regulatory proteins to the basal RNA polymerase II transcription machinery. Mediator is recruited to promoters by direct interactions with regulatory proteins and serves as a scaffold for the assembly of a functional preinitiation complex with RNA polymerase II and the general transcription factors (By similarity). Required for regulated expression of genes controlling fatty acid desaturation by transcription factors including sbp-1 and nhr-49 (PubMed:16651656, PubMed:16799563). Involved in the response to simulated microgravity, in concert with sbp-1, probably acting in the intestine (PubMed:32448509).</text>
</comment>
<comment type="subunit">
    <text evidence="1 3 4">Component of the Mediator complex (By similarity). Interacts with nhr-49, nhr-64 and sbp-1.</text>
</comment>
<comment type="interaction">
    <interactant intactId="EBI-318240">
        <id>Q21955</id>
    </interactant>
    <interactant intactId="EBI-318820">
        <id>O45666</id>
        <label>nhr-49</label>
    </interactant>
    <organismsDiffer>false</organismsDiffer>
    <experiments>4</experiments>
</comment>
<comment type="subcellular location">
    <subcellularLocation>
        <location evidence="6">Nucleus</location>
    </subcellularLocation>
</comment>
<comment type="alternative products">
    <event type="alternative splicing"/>
    <isoform>
        <id>Q21955-1</id>
        <name>a</name>
        <sequence type="displayed"/>
    </isoform>
    <isoform>
        <id>Q21955-2</id>
        <name>b</name>
        <sequence type="described" ref="VSP_020624"/>
    </isoform>
</comment>
<comment type="tissue specificity">
    <text evidence="3">Expressed in the intestine and head neurons.</text>
</comment>
<comment type="developmental stage">
    <text evidence="3">Expressed throughout development.</text>
</comment>
<comment type="induction">
    <text evidence="5">Expression increased by simulated microgravity.</text>
</comment>
<comment type="similarity">
    <text evidence="6">Belongs to the Mediator complex subunit 15 family.</text>
</comment>
<accession>Q21955</accession>
<accession>Q8MPZ3</accession>
<gene>
    <name type="primary">mdt-15</name>
    <name type="ORF">R12B2.5</name>
</gene>
<proteinExistence type="evidence at protein level"/>
<keyword id="KW-0010">Activator</keyword>
<keyword id="KW-0025">Alternative splicing</keyword>
<keyword id="KW-0539">Nucleus</keyword>
<keyword id="KW-1185">Reference proteome</keyword>
<keyword id="KW-0804">Transcription</keyword>
<keyword id="KW-0805">Transcription regulation</keyword>
<sequence length="780" mass="84528">MSEEDWPSPKFREHVIQRLEPELARNRQNAPNLPVPGDARQVEEYVFAKCMSKDEYMRTIAKVINAINCNSKSAAVPSVLQPSQFHSPPCTTAALLGNTPAGGTPGYRAPVPPDPQPTSAQARNPPVTVATTQASTTPSAPNPPGGLPAPSASATAAVAAAVASFPSPDTSIRPGGQITPGSQAPGGGPTPAPNVPFPNGSSQMNGGPAMGQPPPQMGAPNMGGPPNGYGGYGMMNGPPGSGAPMGGNPYNQQIKKDMDQARPWDPSAHMYQQQPQWGAMPPQQPHGYPGRPMNGQGATPTGPSSVLESLINQPQQYPGHHNQMGPPGDRNVAAQRAAAQQQQQQQQQQQQQRPGMVPNQGMMSSEDQTVYSAKLRNMRGSCDSLRTRARQCRHEGNHEAAHKLEVMLSVLEGKRVVSLEYLNHLEMWIARKQDFLNIAPMSQNQNHMGMNDPMMNGEHAMLGNGQVPNPYGGHPGYGHQQYMGPPPPHMQMHQPPMWHQQQHQQQQRMMPQDHMMMQGGGGPVHGMYRGDMGHDPMTSPVNNHRHAPYPNPAAMRNNMRMPNGPGPIGRDRNSMSGSSMSGPSSGAPSMNPMGTPNQKMGTPGSMGGMSGLDDLNYDDFLPNPTPIDALQPTLHVGQNSMNAGPPVQRSNLNETARKELQILDARFEIDPNHQRHDANHIIVVCKIRNQQFPPLRLVVPTTYPAGNVTVDRAVIDLDAYLYDDLQNSVYERLSRPGLSSITDYLNAWEEQVNQYQNQTSGGLDVAFNVGNDFFYDNLNL</sequence>
<protein>
    <recommendedName>
        <fullName>Mediator of RNA polymerase II transcription subunit 15</fullName>
    </recommendedName>
    <alternativeName>
        <fullName>Mediator complex subunit 15</fullName>
    </alternativeName>
</protein>
<reference key="1">
    <citation type="journal article" date="1998" name="Science">
        <title>Genome sequence of the nematode C. elegans: a platform for investigating biology.</title>
        <authorList>
            <consortium name="The C. elegans sequencing consortium"/>
        </authorList>
    </citation>
    <scope>NUCLEOTIDE SEQUENCE [LARGE SCALE GENOMIC DNA]</scope>
    <scope>ALTERNATIVE SPLICING</scope>
    <source>
        <strain>Bristol N2</strain>
    </source>
</reference>
<reference key="2">
    <citation type="journal article" date="2006" name="Genes Dev.">
        <title>A Mediator subunit, MDT-15, integrates regulation of fatty acid metabolism by NHR-49-dependent and -independent pathways in C. elegans.</title>
        <authorList>
            <person name="Taubert S."/>
            <person name="Van Gilst M.R."/>
            <person name="Hansen M."/>
            <person name="Yamamoto K.R."/>
        </authorList>
    </citation>
    <scope>FUNCTION</scope>
    <scope>INTERACTION WITH NHR-49 AND NHR-64</scope>
    <scope>TISSUE SPECIFICITY</scope>
    <scope>DEVELOPMENTAL STAGE</scope>
</reference>
<reference key="3">
    <citation type="journal article" date="2006" name="Nature">
        <title>An ARC/Mediator subunit required for SREBP control of cholesterol and lipid homeostasis.</title>
        <authorList>
            <person name="Yang F."/>
            <person name="Vought B.W."/>
            <person name="Satterlee J.S."/>
            <person name="Walker A.K."/>
            <person name="Jim Sun Z.-Y."/>
            <person name="Watts J.L."/>
            <person name="DeBeaumont R."/>
            <person name="Saito R.M."/>
            <person name="Hyberts S.G."/>
            <person name="Yang S."/>
            <person name="Macol C."/>
            <person name="Iyer L."/>
            <person name="Tjian R."/>
            <person name="van den Heuvel S."/>
            <person name="Hart A.C."/>
            <person name="Wagner G."/>
            <person name="Naeaer A.M."/>
        </authorList>
    </citation>
    <scope>FUNCTION</scope>
    <scope>INTERACTION WITH SBP-1</scope>
</reference>
<reference key="4">
    <citation type="journal article" date="2020" name="Biochem. Biophys. Res. Commun.">
        <title>Lipid metabolic sensors of MDT-15 and SBP-1 regulated the response to simulated microgravity in the intestine of Caenorhabditis elegans.</title>
        <authorList>
            <person name="Liu H."/>
            <person name="Li D."/>
            <person name="Zhang R."/>
            <person name="Sun L."/>
            <person name="Wang D."/>
        </authorList>
    </citation>
    <scope>FUNCTION</scope>
    <scope>INDUCTION</scope>
</reference>